<reference key="1">
    <citation type="journal article" date="2013" name="Nature">
        <title>The zebrafish reference genome sequence and its relationship to the human genome.</title>
        <authorList>
            <person name="Howe K."/>
            <person name="Clark M.D."/>
            <person name="Torroja C.F."/>
            <person name="Torrance J."/>
            <person name="Berthelot C."/>
            <person name="Muffato M."/>
            <person name="Collins J.E."/>
            <person name="Humphray S."/>
            <person name="McLaren K."/>
            <person name="Matthews L."/>
            <person name="McLaren S."/>
            <person name="Sealy I."/>
            <person name="Caccamo M."/>
            <person name="Churcher C."/>
            <person name="Scott C."/>
            <person name="Barrett J.C."/>
            <person name="Koch R."/>
            <person name="Rauch G.J."/>
            <person name="White S."/>
            <person name="Chow W."/>
            <person name="Kilian B."/>
            <person name="Quintais L.T."/>
            <person name="Guerra-Assuncao J.A."/>
            <person name="Zhou Y."/>
            <person name="Gu Y."/>
            <person name="Yen J."/>
            <person name="Vogel J.H."/>
            <person name="Eyre T."/>
            <person name="Redmond S."/>
            <person name="Banerjee R."/>
            <person name="Chi J."/>
            <person name="Fu B."/>
            <person name="Langley E."/>
            <person name="Maguire S.F."/>
            <person name="Laird G.K."/>
            <person name="Lloyd D."/>
            <person name="Kenyon E."/>
            <person name="Donaldson S."/>
            <person name="Sehra H."/>
            <person name="Almeida-King J."/>
            <person name="Loveland J."/>
            <person name="Trevanion S."/>
            <person name="Jones M."/>
            <person name="Quail M."/>
            <person name="Willey D."/>
            <person name="Hunt A."/>
            <person name="Burton J."/>
            <person name="Sims S."/>
            <person name="McLay K."/>
            <person name="Plumb B."/>
            <person name="Davis J."/>
            <person name="Clee C."/>
            <person name="Oliver K."/>
            <person name="Clark R."/>
            <person name="Riddle C."/>
            <person name="Elliot D."/>
            <person name="Threadgold G."/>
            <person name="Harden G."/>
            <person name="Ware D."/>
            <person name="Begum S."/>
            <person name="Mortimore B."/>
            <person name="Kerry G."/>
            <person name="Heath P."/>
            <person name="Phillimore B."/>
            <person name="Tracey A."/>
            <person name="Corby N."/>
            <person name="Dunn M."/>
            <person name="Johnson C."/>
            <person name="Wood J."/>
            <person name="Clark S."/>
            <person name="Pelan S."/>
            <person name="Griffiths G."/>
            <person name="Smith M."/>
            <person name="Glithero R."/>
            <person name="Howden P."/>
            <person name="Barker N."/>
            <person name="Lloyd C."/>
            <person name="Stevens C."/>
            <person name="Harley J."/>
            <person name="Holt K."/>
            <person name="Panagiotidis G."/>
            <person name="Lovell J."/>
            <person name="Beasley H."/>
            <person name="Henderson C."/>
            <person name="Gordon D."/>
            <person name="Auger K."/>
            <person name="Wright D."/>
            <person name="Collins J."/>
            <person name="Raisen C."/>
            <person name="Dyer L."/>
            <person name="Leung K."/>
            <person name="Robertson L."/>
            <person name="Ambridge K."/>
            <person name="Leongamornlert D."/>
            <person name="McGuire S."/>
            <person name="Gilderthorp R."/>
            <person name="Griffiths C."/>
            <person name="Manthravadi D."/>
            <person name="Nichol S."/>
            <person name="Barker G."/>
            <person name="Whitehead S."/>
            <person name="Kay M."/>
            <person name="Brown J."/>
            <person name="Murnane C."/>
            <person name="Gray E."/>
            <person name="Humphries M."/>
            <person name="Sycamore N."/>
            <person name="Barker D."/>
            <person name="Saunders D."/>
            <person name="Wallis J."/>
            <person name="Babbage A."/>
            <person name="Hammond S."/>
            <person name="Mashreghi-Mohammadi M."/>
            <person name="Barr L."/>
            <person name="Martin S."/>
            <person name="Wray P."/>
            <person name="Ellington A."/>
            <person name="Matthews N."/>
            <person name="Ellwood M."/>
            <person name="Woodmansey R."/>
            <person name="Clark G."/>
            <person name="Cooper J."/>
            <person name="Tromans A."/>
            <person name="Grafham D."/>
            <person name="Skuce C."/>
            <person name="Pandian R."/>
            <person name="Andrews R."/>
            <person name="Harrison E."/>
            <person name="Kimberley A."/>
            <person name="Garnett J."/>
            <person name="Fosker N."/>
            <person name="Hall R."/>
            <person name="Garner P."/>
            <person name="Kelly D."/>
            <person name="Bird C."/>
            <person name="Palmer S."/>
            <person name="Gehring I."/>
            <person name="Berger A."/>
            <person name="Dooley C.M."/>
            <person name="Ersan-Urun Z."/>
            <person name="Eser C."/>
            <person name="Geiger H."/>
            <person name="Geisler M."/>
            <person name="Karotki L."/>
            <person name="Kirn A."/>
            <person name="Konantz J."/>
            <person name="Konantz M."/>
            <person name="Oberlander M."/>
            <person name="Rudolph-Geiger S."/>
            <person name="Teucke M."/>
            <person name="Lanz C."/>
            <person name="Raddatz G."/>
            <person name="Osoegawa K."/>
            <person name="Zhu B."/>
            <person name="Rapp A."/>
            <person name="Widaa S."/>
            <person name="Langford C."/>
            <person name="Yang F."/>
            <person name="Schuster S.C."/>
            <person name="Carter N.P."/>
            <person name="Harrow J."/>
            <person name="Ning Z."/>
            <person name="Herrero J."/>
            <person name="Searle S.M."/>
            <person name="Enright A."/>
            <person name="Geisler R."/>
            <person name="Plasterk R.H."/>
            <person name="Lee C."/>
            <person name="Westerfield M."/>
            <person name="de Jong P.J."/>
            <person name="Zon L.I."/>
            <person name="Postlethwait J.H."/>
            <person name="Nusslein-Volhard C."/>
            <person name="Hubbard T.J."/>
            <person name="Roest Crollius H."/>
            <person name="Rogers J."/>
            <person name="Stemple D.L."/>
        </authorList>
    </citation>
    <scope>NUCLEOTIDE SEQUENCE [LARGE SCALE GENOMIC DNA]</scope>
    <source>
        <strain>Tuebingen</strain>
    </source>
</reference>
<reference evidence="8" key="2">
    <citation type="journal article" date="2008" name="Dev. Biol.">
        <title>Tri-phasic expression of posterior Hox genes during development of pectoral fins in zebrafish: implications for the evolution of vertebrate paired appendages.</title>
        <authorList>
            <person name="Ahn D."/>
            <person name="Ho R.K."/>
        </authorList>
    </citation>
    <scope>TISSUE SPECIFICITY</scope>
</reference>
<organism>
    <name type="scientific">Danio rerio</name>
    <name type="common">Zebrafish</name>
    <name type="synonym">Brachydanio rerio</name>
    <dbReference type="NCBI Taxonomy" id="7955"/>
    <lineage>
        <taxon>Eukaryota</taxon>
        <taxon>Metazoa</taxon>
        <taxon>Chordata</taxon>
        <taxon>Craniata</taxon>
        <taxon>Vertebrata</taxon>
        <taxon>Euteleostomi</taxon>
        <taxon>Actinopterygii</taxon>
        <taxon>Neopterygii</taxon>
        <taxon>Teleostei</taxon>
        <taxon>Ostariophysi</taxon>
        <taxon>Cypriniformes</taxon>
        <taxon>Danionidae</taxon>
        <taxon>Danioninae</taxon>
        <taxon>Danio</taxon>
    </lineage>
</organism>
<protein>
    <recommendedName>
        <fullName evidence="7">Tax1-binding protein 1 homolog A</fullName>
    </recommendedName>
</protein>
<evidence type="ECO:0000250" key="1"/>
<evidence type="ECO:0000250" key="2">
    <source>
        <dbReference type="UniProtKB" id="Q86VP1"/>
    </source>
</evidence>
<evidence type="ECO:0000255" key="3"/>
<evidence type="ECO:0000255" key="4">
    <source>
        <dbReference type="PROSITE-ProRule" id="PRU01253"/>
    </source>
</evidence>
<evidence type="ECO:0000256" key="5">
    <source>
        <dbReference type="SAM" id="MobiDB-lite"/>
    </source>
</evidence>
<evidence type="ECO:0000269" key="6">
    <source>
    </source>
</evidence>
<evidence type="ECO:0000303" key="7">
    <source>
    </source>
</evidence>
<evidence type="ECO:0000305" key="8"/>
<evidence type="ECO:0000312" key="9">
    <source>
        <dbReference type="ZFIN" id="ZDB-GENE-060503-587"/>
    </source>
</evidence>
<gene>
    <name evidence="7 9" type="primary">tax1bp1a</name>
    <name evidence="9" type="synonym">si:ch211-204j16.2</name>
</gene>
<name>TXB1A_DANRE</name>
<comment type="function">
    <text evidence="1">May have anti-apoptotic activity.</text>
</comment>
<comment type="tissue specificity">
    <text evidence="6">Little expression is observed during pectoral fin development, except for an elevated level of expression in the distal mesenchyme cells of some samples.</text>
</comment>
<comment type="domain">
    <text evidence="2">The C-terminal UBZ-type zinc fingers function as ubiquitin-binding domains.</text>
</comment>
<proteinExistence type="evidence at transcript level"/>
<dbReference type="EMBL" id="BX601646">
    <property type="protein sequence ID" value="CAK04430.2"/>
    <property type="molecule type" value="Genomic_DNA"/>
</dbReference>
<dbReference type="SMR" id="Q1LWB0"/>
<dbReference type="FunCoup" id="Q1LWB0">
    <property type="interactions" value="83"/>
</dbReference>
<dbReference type="STRING" id="7955.ENSDARP00000133043"/>
<dbReference type="PaxDb" id="7955-ENSDARP00000095151"/>
<dbReference type="AGR" id="ZFIN:ZDB-GENE-060503-587"/>
<dbReference type="ZFIN" id="ZDB-GENE-060503-587">
    <property type="gene designation" value="tax1bp1a"/>
</dbReference>
<dbReference type="eggNOG" id="ENOG502QQ1D">
    <property type="taxonomic scope" value="Eukaryota"/>
</dbReference>
<dbReference type="HOGENOM" id="CLU_021315_1_0_1"/>
<dbReference type="InParanoid" id="Q1LWB0"/>
<dbReference type="PhylomeDB" id="Q1LWB0"/>
<dbReference type="PRO" id="PR:Q1LWB0"/>
<dbReference type="Proteomes" id="UP000000437">
    <property type="component" value="Unplaced"/>
</dbReference>
<dbReference type="GO" id="GO:0008270">
    <property type="term" value="F:zinc ion binding"/>
    <property type="evidence" value="ECO:0007669"/>
    <property type="project" value="UniProtKB-KW"/>
</dbReference>
<dbReference type="GO" id="GO:0006915">
    <property type="term" value="P:apoptotic process"/>
    <property type="evidence" value="ECO:0007669"/>
    <property type="project" value="UniProtKB-KW"/>
</dbReference>
<dbReference type="CDD" id="cd21969">
    <property type="entry name" value="Zn-C2H2_TAX1BP1_rpt1"/>
    <property type="match status" value="1"/>
</dbReference>
<dbReference type="CDD" id="cd21970">
    <property type="entry name" value="Zn-C2H2_TAX1BP1_rpt2"/>
    <property type="match status" value="1"/>
</dbReference>
<dbReference type="FunFam" id="2.60.40.2840:FF:000002">
    <property type="entry name" value="Tax1-binding protein 1 isoform 2"/>
    <property type="match status" value="1"/>
</dbReference>
<dbReference type="Gene3D" id="2.60.40.2840">
    <property type="match status" value="1"/>
</dbReference>
<dbReference type="Gene3D" id="6.20.250.40">
    <property type="match status" value="1"/>
</dbReference>
<dbReference type="InterPro" id="IPR012852">
    <property type="entry name" value="CALCOCO1-like"/>
</dbReference>
<dbReference type="InterPro" id="IPR041641">
    <property type="entry name" value="CALCOCO1/2_Zn_UBZ1"/>
</dbReference>
<dbReference type="InterPro" id="IPR041611">
    <property type="entry name" value="SKICH"/>
</dbReference>
<dbReference type="InterPro" id="IPR051002">
    <property type="entry name" value="UBA_autophagy_assoc_protein"/>
</dbReference>
<dbReference type="PANTHER" id="PTHR31915">
    <property type="entry name" value="SKICH DOMAIN-CONTAINING PROTEIN"/>
    <property type="match status" value="1"/>
</dbReference>
<dbReference type="PANTHER" id="PTHR31915:SF7">
    <property type="entry name" value="TAX1-BINDING PROTEIN 1 HOMOLOG A"/>
    <property type="match status" value="1"/>
</dbReference>
<dbReference type="Pfam" id="PF07888">
    <property type="entry name" value="CALCOCO1"/>
    <property type="match status" value="1"/>
</dbReference>
<dbReference type="Pfam" id="PF17751">
    <property type="entry name" value="SKICH"/>
    <property type="match status" value="1"/>
</dbReference>
<dbReference type="Pfam" id="PF18112">
    <property type="entry name" value="Zn-C2H2_12"/>
    <property type="match status" value="2"/>
</dbReference>
<dbReference type="PROSITE" id="PS51905">
    <property type="entry name" value="ZF_UBZ1"/>
    <property type="match status" value="2"/>
</dbReference>
<feature type="chain" id="PRO_0000379495" description="Tax1-binding protein 1 homolog A">
    <location>
        <begin position="1"/>
        <end position="781"/>
    </location>
</feature>
<feature type="zinc finger region" description="UBZ1-type 1" evidence="4">
    <location>
        <begin position="716"/>
        <end position="742"/>
    </location>
</feature>
<feature type="zinc finger region" description="UBZ1-type 2" evidence="4">
    <location>
        <begin position="743"/>
        <end position="769"/>
    </location>
</feature>
<feature type="region of interest" description="Disordered" evidence="5">
    <location>
        <begin position="441"/>
        <end position="510"/>
    </location>
</feature>
<feature type="region of interest" description="Disordered" evidence="5">
    <location>
        <begin position="630"/>
        <end position="691"/>
    </location>
</feature>
<feature type="coiled-coil region" evidence="3">
    <location>
        <begin position="148"/>
        <end position="453"/>
    </location>
</feature>
<feature type="coiled-coil region" evidence="3">
    <location>
        <begin position="488"/>
        <end position="581"/>
    </location>
</feature>
<feature type="compositionally biased region" description="Polar residues" evidence="5">
    <location>
        <begin position="441"/>
        <end position="465"/>
    </location>
</feature>
<feature type="compositionally biased region" description="Basic and acidic residues" evidence="5">
    <location>
        <begin position="484"/>
        <end position="495"/>
    </location>
</feature>
<feature type="compositionally biased region" description="Acidic residues" evidence="5">
    <location>
        <begin position="496"/>
        <end position="510"/>
    </location>
</feature>
<feature type="compositionally biased region" description="Pro residues" evidence="5">
    <location>
        <begin position="646"/>
        <end position="656"/>
    </location>
</feature>
<feature type="binding site" evidence="4">
    <location>
        <position position="719"/>
    </location>
    <ligand>
        <name>Zn(2+)</name>
        <dbReference type="ChEBI" id="CHEBI:29105"/>
        <label>1</label>
    </ligand>
</feature>
<feature type="binding site" evidence="4">
    <location>
        <position position="722"/>
    </location>
    <ligand>
        <name>Zn(2+)</name>
        <dbReference type="ChEBI" id="CHEBI:29105"/>
        <label>1</label>
    </ligand>
</feature>
<feature type="binding site" evidence="4">
    <location>
        <position position="738"/>
    </location>
    <ligand>
        <name>Zn(2+)</name>
        <dbReference type="ChEBI" id="CHEBI:29105"/>
        <label>1</label>
    </ligand>
</feature>
<feature type="binding site" evidence="4">
    <location>
        <position position="742"/>
    </location>
    <ligand>
        <name>Zn(2+)</name>
        <dbReference type="ChEBI" id="CHEBI:29105"/>
        <label>1</label>
    </ligand>
</feature>
<feature type="binding site" evidence="4">
    <location>
        <position position="746"/>
    </location>
    <ligand>
        <name>Zn(2+)</name>
        <dbReference type="ChEBI" id="CHEBI:29105"/>
        <label>2</label>
    </ligand>
</feature>
<feature type="binding site" evidence="4">
    <location>
        <position position="749"/>
    </location>
    <ligand>
        <name>Zn(2+)</name>
        <dbReference type="ChEBI" id="CHEBI:29105"/>
        <label>2</label>
    </ligand>
</feature>
<feature type="binding site" evidence="4">
    <location>
        <position position="765"/>
    </location>
    <ligand>
        <name>Zn(2+)</name>
        <dbReference type="ChEBI" id="CHEBI:29105"/>
        <label>2</label>
    </ligand>
</feature>
<feature type="binding site" evidence="4">
    <location>
        <position position="769"/>
    </location>
    <ligand>
        <name>Zn(2+)</name>
        <dbReference type="ChEBI" id="CHEBI:29105"/>
        <label>2</label>
    </ligand>
</feature>
<accession>Q1LWB0</accession>
<sequence length="781" mass="89584">MSSSCNVGASAGGGGSVVMETSNFAHVIFQNVGKSFLPQAALECHYTLTPFITPHPKDWVGIFKVGWSSARDYYTFLWSPMPENYTEGSTVHRTIIFQGYYVPRSDGEFYQFCYVTHTGEIRGASTPFQFRPATPTGEELLTVEDDGNSDILVRVEEVQQECKELQKALRLLTQERDQLQEKQRQQNQELQKSLIEEKEEAQSRVRQLEQDLLKITQKAVLKETELDCLRDKLQKVISERDSLQTQLKNERDERELYKSHVRSAELENTKLSAELQMLKAVELNREVTIAQYQEELHRLRTERDTHPAETGLKEQLRQAEEQLQATRQQAAMLGSELRDASGGRDRTMTELYRVRQEAEELRAHLAEAQEECRHAQDQLDRMKNQTSQEMGRAGGGVGVASELEAELQKEVEELKLRLNMAAEHYKEKYRECQRLRRQVTKLTQQQETQQGDANRNDASTETTLELHTPDAETPSESYPAEIKTVARDVEKSRDEEGNEQEEEDEEEEECSLSVEAELACMEEKWREQCTINENLKLLLANEEKRFKTQVAEKDREVSALRESLVVVTKEKERLEKQYMREGTTRSRRLEVREPVVLRYPLPYPQDPPPLPLVPQQPAELQFGNPYLEQETRDGADGALSPEQTCRPPPLAPPPWGGPVVCSQPSRSLSPPDGLENPTEERPTGGDGEAPAVCEHQSLESNESHTSFCFDTRPDVHKQCPLCEVIFPPHFEQSSFERHVESHWRVCPVCSEQFPLDCQQQLYEKHVHTHFDGNVLNFDNFD</sequence>
<keyword id="KW-0053">Apoptosis</keyword>
<keyword id="KW-0175">Coiled coil</keyword>
<keyword id="KW-0479">Metal-binding</keyword>
<keyword id="KW-1185">Reference proteome</keyword>
<keyword id="KW-0677">Repeat</keyword>
<keyword id="KW-0862">Zinc</keyword>
<keyword id="KW-0863">Zinc-finger</keyword>